<evidence type="ECO:0000255" key="1">
    <source>
        <dbReference type="HAMAP-Rule" id="MF_01854"/>
    </source>
</evidence>
<keyword id="KW-0119">Carbohydrate metabolism</keyword>
<keyword id="KW-0378">Hydrolase</keyword>
<keyword id="KW-0464">Manganese</keyword>
<keyword id="KW-1185">Reference proteome</keyword>
<comment type="catalytic activity">
    <reaction evidence="1">
        <text>beta-D-fructose 1,6-bisphosphate + H2O = beta-D-fructose 6-phosphate + phosphate</text>
        <dbReference type="Rhea" id="RHEA:11064"/>
        <dbReference type="ChEBI" id="CHEBI:15377"/>
        <dbReference type="ChEBI" id="CHEBI:32966"/>
        <dbReference type="ChEBI" id="CHEBI:43474"/>
        <dbReference type="ChEBI" id="CHEBI:57634"/>
        <dbReference type="EC" id="3.1.3.11"/>
    </reaction>
</comment>
<comment type="cofactor">
    <cofactor evidence="1">
        <name>Mn(2+)</name>
        <dbReference type="ChEBI" id="CHEBI:29035"/>
    </cofactor>
</comment>
<comment type="pathway">
    <text evidence="1">Carbohydrate biosynthesis; gluconeogenesis.</text>
</comment>
<comment type="similarity">
    <text evidence="1">Belongs to the FBPase class 3 family.</text>
</comment>
<sequence>MLLESNTKNEEIKDNLKYLVLLSKQYPTINEAATEIINLQAILNLPKGTEHFLSDVHGEYEQFIHVLKNASGVIKRKIDDIFGNRLMQSEKKSLATLIYYPEQKLDIILKQEKNIDDWYKITLYRLIEVCRNVSSKYTRSKVRKALPKEFSYIIEELLHEQPKGVDKQEYYDEIIKTIISIDRAKEFITAISKLIQRLVVDRLHIIGDIFDRGPRADIIMDKLEEYHAVDIQWGNHDILWMGAASGSSVCMANVIRISARYANLSTIEDGYGINLLPLATFAMDFYGNDKCKNFEPKIESDKSYTVKEIELIGKMHKAIAIIQFKLEGEAIKRHPEFKMEHRMLLNKINFEDSTIELDGKKYKLNDTSFPTIDKNDPYKLIDEEREVVEKLRSSFVNSEKLNRHVRFLFSHGNLYLKFNSNLLYHGCIPLNEDGTFKEVLIGSHKYKGKALLDKLDVLARKSFFYEENSKNSKYENDMIWYLWSGPFSPLFGKEKMTTFERYFIDDKKTHYEKKDPYYHYRDDEDICINILREFGLDSEQAHIINGHVPVESKNGENPIKANGKLIVIDGGFSKAYQSKTGIAGYTLIYNSFGLQLVSHELFETTEKAIKEETDIISSTVIFEKSVRRKRVGDTDIGKDLKKQLYELNLLLLAYKKGLIKEFVKS</sequence>
<accession>Q97IR8</accession>
<proteinExistence type="inferred from homology"/>
<organism>
    <name type="scientific">Clostridium acetobutylicum (strain ATCC 824 / DSM 792 / JCM 1419 / IAM 19013 / LMG 5710 / NBRC 13948 / NRRL B-527 / VKM B-1787 / 2291 / W)</name>
    <dbReference type="NCBI Taxonomy" id="272562"/>
    <lineage>
        <taxon>Bacteria</taxon>
        <taxon>Bacillati</taxon>
        <taxon>Bacillota</taxon>
        <taxon>Clostridia</taxon>
        <taxon>Eubacteriales</taxon>
        <taxon>Clostridiaceae</taxon>
        <taxon>Clostridium</taxon>
    </lineage>
</organism>
<name>F16PC_CLOAB</name>
<gene>
    <name evidence="1" type="primary">fbp</name>
    <name type="ordered locus">CA_C1572</name>
</gene>
<protein>
    <recommendedName>
        <fullName evidence="1">Fructose-1,6-bisphosphatase class 3</fullName>
        <shortName evidence="1">FBPase class 3</shortName>
        <ecNumber evidence="1">3.1.3.11</ecNumber>
    </recommendedName>
    <alternativeName>
        <fullName evidence="1">D-fructose-1,6-bisphosphate 1-phosphohydrolase class 3</fullName>
    </alternativeName>
</protein>
<feature type="chain" id="PRO_0000363077" description="Fructose-1,6-bisphosphatase class 3">
    <location>
        <begin position="1"/>
        <end position="665"/>
    </location>
</feature>
<reference key="1">
    <citation type="journal article" date="2001" name="J. Bacteriol.">
        <title>Genome sequence and comparative analysis of the solvent-producing bacterium Clostridium acetobutylicum.</title>
        <authorList>
            <person name="Noelling J."/>
            <person name="Breton G."/>
            <person name="Omelchenko M.V."/>
            <person name="Makarova K.S."/>
            <person name="Zeng Q."/>
            <person name="Gibson R."/>
            <person name="Lee H.M."/>
            <person name="Dubois J."/>
            <person name="Qiu D."/>
            <person name="Hitti J."/>
            <person name="Wolf Y.I."/>
            <person name="Tatusov R.L."/>
            <person name="Sabathe F."/>
            <person name="Doucette-Stamm L.A."/>
            <person name="Soucaille P."/>
            <person name="Daly M.J."/>
            <person name="Bennett G.N."/>
            <person name="Koonin E.V."/>
            <person name="Smith D.R."/>
        </authorList>
    </citation>
    <scope>NUCLEOTIDE SEQUENCE [LARGE SCALE GENOMIC DNA]</scope>
    <source>
        <strain>ATCC 824 / DSM 792 / JCM 1419 / IAM 19013 / LMG 5710 / NBRC 13948 / NRRL B-527 / VKM B-1787 / 2291 / W</strain>
    </source>
</reference>
<dbReference type="EC" id="3.1.3.11" evidence="1"/>
<dbReference type="EMBL" id="AE001437">
    <property type="protein sequence ID" value="AAK79539.1"/>
    <property type="molecule type" value="Genomic_DNA"/>
</dbReference>
<dbReference type="PIR" id="H97093">
    <property type="entry name" value="H97093"/>
</dbReference>
<dbReference type="RefSeq" id="NP_348199.1">
    <property type="nucleotide sequence ID" value="NC_003030.1"/>
</dbReference>
<dbReference type="RefSeq" id="WP_010964880.1">
    <property type="nucleotide sequence ID" value="NC_003030.1"/>
</dbReference>
<dbReference type="STRING" id="272562.CA_C1572"/>
<dbReference type="KEGG" id="cac:CA_C1572"/>
<dbReference type="PATRIC" id="fig|272562.8.peg.1772"/>
<dbReference type="eggNOG" id="COG3855">
    <property type="taxonomic scope" value="Bacteria"/>
</dbReference>
<dbReference type="HOGENOM" id="CLU_028392_2_0_9"/>
<dbReference type="OrthoDB" id="9779903at2"/>
<dbReference type="UniPathway" id="UPA00138"/>
<dbReference type="Proteomes" id="UP000000814">
    <property type="component" value="Chromosome"/>
</dbReference>
<dbReference type="GO" id="GO:0042132">
    <property type="term" value="F:fructose 1,6-bisphosphate 1-phosphatase activity"/>
    <property type="evidence" value="ECO:0007669"/>
    <property type="project" value="UniProtKB-UniRule"/>
</dbReference>
<dbReference type="GO" id="GO:0006094">
    <property type="term" value="P:gluconeogenesis"/>
    <property type="evidence" value="ECO:0007669"/>
    <property type="project" value="UniProtKB-UniRule"/>
</dbReference>
<dbReference type="Gene3D" id="3.60.21.10">
    <property type="match status" value="1"/>
</dbReference>
<dbReference type="HAMAP" id="MF_01854">
    <property type="entry name" value="FBPase_class3"/>
    <property type="match status" value="1"/>
</dbReference>
<dbReference type="InterPro" id="IPR009164">
    <property type="entry name" value="FBPtase_class3"/>
</dbReference>
<dbReference type="InterPro" id="IPR029052">
    <property type="entry name" value="Metallo-depent_PP-like"/>
</dbReference>
<dbReference type="Pfam" id="PF06874">
    <property type="entry name" value="FBPase_2"/>
    <property type="match status" value="1"/>
</dbReference>
<dbReference type="PIRSF" id="PIRSF000906">
    <property type="entry name" value="FBPtase_Bacill"/>
    <property type="match status" value="1"/>
</dbReference>
<dbReference type="SUPFAM" id="SSF56300">
    <property type="entry name" value="Metallo-dependent phosphatases"/>
    <property type="match status" value="1"/>
</dbReference>